<feature type="chain" id="PRO_0000164512" description="D-aminoacyl-tRNA deacylase">
    <location>
        <begin position="1"/>
        <end position="146"/>
    </location>
</feature>
<feature type="short sequence motif" description="Gly-cisPro motif, important for rejection of L-amino acids" evidence="1">
    <location>
        <begin position="137"/>
        <end position="138"/>
    </location>
</feature>
<sequence>MRALIQRVKEAKVIVDDVITGEIRQGLLVFLGLGRDDQLENGKKLIDKILKYRVFDDENGKMGWNLSQAQGGLLLVSQFTLMAQTQKGLRPDFGPAMPPQQAKVLYDQLVEYAQSQFDHVETGIFAADMQVHLINDGPVTFQLEIL</sequence>
<reference key="1">
    <citation type="journal article" date="2004" name="Nucleic Acids Res.">
        <title>Unique features revealed by the genome sequence of Acinetobacter sp. ADP1, a versatile and naturally transformation competent bacterium.</title>
        <authorList>
            <person name="Barbe V."/>
            <person name="Vallenet D."/>
            <person name="Fonknechten N."/>
            <person name="Kreimeyer A."/>
            <person name="Oztas S."/>
            <person name="Labarre L."/>
            <person name="Cruveiller S."/>
            <person name="Robert C."/>
            <person name="Duprat S."/>
            <person name="Wincker P."/>
            <person name="Ornston L.N."/>
            <person name="Weissenbach J."/>
            <person name="Marliere P."/>
            <person name="Cohen G.N."/>
            <person name="Medigue C."/>
        </authorList>
    </citation>
    <scope>NUCLEOTIDE SEQUENCE [LARGE SCALE GENOMIC DNA]</scope>
    <source>
        <strain>ATCC 33305 / BD413 / ADP1</strain>
    </source>
</reference>
<evidence type="ECO:0000255" key="1">
    <source>
        <dbReference type="HAMAP-Rule" id="MF_00518"/>
    </source>
</evidence>
<comment type="function">
    <text evidence="1">An aminoacyl-tRNA editing enzyme that deacylates mischarged D-aminoacyl-tRNAs. Also deacylates mischarged glycyl-tRNA(Ala), protecting cells against glycine mischarging by AlaRS. Acts via tRNA-based rather than protein-based catalysis; rejects L-amino acids rather than detecting D-amino acids in the active site. By recycling D-aminoacyl-tRNA to D-amino acids and free tRNA molecules, this enzyme counteracts the toxicity associated with the formation of D-aminoacyl-tRNA entities in vivo and helps enforce protein L-homochirality.</text>
</comment>
<comment type="catalytic activity">
    <reaction evidence="1">
        <text>glycyl-tRNA(Ala) + H2O = tRNA(Ala) + glycine + H(+)</text>
        <dbReference type="Rhea" id="RHEA:53744"/>
        <dbReference type="Rhea" id="RHEA-COMP:9657"/>
        <dbReference type="Rhea" id="RHEA-COMP:13640"/>
        <dbReference type="ChEBI" id="CHEBI:15377"/>
        <dbReference type="ChEBI" id="CHEBI:15378"/>
        <dbReference type="ChEBI" id="CHEBI:57305"/>
        <dbReference type="ChEBI" id="CHEBI:78442"/>
        <dbReference type="ChEBI" id="CHEBI:78522"/>
        <dbReference type="EC" id="3.1.1.96"/>
    </reaction>
</comment>
<comment type="catalytic activity">
    <reaction evidence="1">
        <text>a D-aminoacyl-tRNA + H2O = a tRNA + a D-alpha-amino acid + H(+)</text>
        <dbReference type="Rhea" id="RHEA:13953"/>
        <dbReference type="Rhea" id="RHEA-COMP:10123"/>
        <dbReference type="Rhea" id="RHEA-COMP:10124"/>
        <dbReference type="ChEBI" id="CHEBI:15377"/>
        <dbReference type="ChEBI" id="CHEBI:15378"/>
        <dbReference type="ChEBI" id="CHEBI:59871"/>
        <dbReference type="ChEBI" id="CHEBI:78442"/>
        <dbReference type="ChEBI" id="CHEBI:79333"/>
        <dbReference type="EC" id="3.1.1.96"/>
    </reaction>
</comment>
<comment type="subunit">
    <text evidence="1">Homodimer.</text>
</comment>
<comment type="subcellular location">
    <subcellularLocation>
        <location evidence="1">Cytoplasm</location>
    </subcellularLocation>
</comment>
<comment type="domain">
    <text evidence="1">A Gly-cisPro motif from one monomer fits into the active site of the other monomer to allow specific chiral rejection of L-amino acids.</text>
</comment>
<comment type="similarity">
    <text evidence="1">Belongs to the DTD family.</text>
</comment>
<proteinExistence type="inferred from homology"/>
<gene>
    <name evidence="1" type="primary">dtd</name>
    <name type="ordered locus">ACIAD3563</name>
</gene>
<dbReference type="EC" id="3.1.1.96" evidence="1"/>
<dbReference type="EMBL" id="CR543861">
    <property type="protein sequence ID" value="CAG70205.1"/>
    <property type="molecule type" value="Genomic_DNA"/>
</dbReference>
<dbReference type="RefSeq" id="WP_004923213.1">
    <property type="nucleotide sequence ID" value="NC_005966.1"/>
</dbReference>
<dbReference type="SMR" id="Q6F6W0"/>
<dbReference type="STRING" id="202950.GCA_001485005_01651"/>
<dbReference type="GeneID" id="45235738"/>
<dbReference type="KEGG" id="aci:ACIAD3563"/>
<dbReference type="eggNOG" id="COG1490">
    <property type="taxonomic scope" value="Bacteria"/>
</dbReference>
<dbReference type="HOGENOM" id="CLU_076901_1_1_6"/>
<dbReference type="OrthoDB" id="9801395at2"/>
<dbReference type="BioCyc" id="ASP62977:ACIAD_RS16120-MONOMER"/>
<dbReference type="Proteomes" id="UP000000430">
    <property type="component" value="Chromosome"/>
</dbReference>
<dbReference type="GO" id="GO:0005737">
    <property type="term" value="C:cytoplasm"/>
    <property type="evidence" value="ECO:0007669"/>
    <property type="project" value="UniProtKB-SubCell"/>
</dbReference>
<dbReference type="GO" id="GO:0051500">
    <property type="term" value="F:D-tyrosyl-tRNA(Tyr) deacylase activity"/>
    <property type="evidence" value="ECO:0007669"/>
    <property type="project" value="TreeGrafter"/>
</dbReference>
<dbReference type="GO" id="GO:0106026">
    <property type="term" value="F:Gly-tRNA(Ala) deacylase activity"/>
    <property type="evidence" value="ECO:0007669"/>
    <property type="project" value="UniProtKB-UniRule"/>
</dbReference>
<dbReference type="GO" id="GO:0043908">
    <property type="term" value="F:Ser(Gly)-tRNA(Ala) hydrolase activity"/>
    <property type="evidence" value="ECO:0007669"/>
    <property type="project" value="UniProtKB-UniRule"/>
</dbReference>
<dbReference type="GO" id="GO:0000049">
    <property type="term" value="F:tRNA binding"/>
    <property type="evidence" value="ECO:0007669"/>
    <property type="project" value="UniProtKB-UniRule"/>
</dbReference>
<dbReference type="GO" id="GO:0019478">
    <property type="term" value="P:D-amino acid catabolic process"/>
    <property type="evidence" value="ECO:0007669"/>
    <property type="project" value="UniProtKB-UniRule"/>
</dbReference>
<dbReference type="CDD" id="cd00563">
    <property type="entry name" value="Dtyr_deacylase"/>
    <property type="match status" value="1"/>
</dbReference>
<dbReference type="FunFam" id="3.50.80.10:FF:000001">
    <property type="entry name" value="D-aminoacyl-tRNA deacylase"/>
    <property type="match status" value="1"/>
</dbReference>
<dbReference type="Gene3D" id="3.50.80.10">
    <property type="entry name" value="D-tyrosyl-tRNA(Tyr) deacylase"/>
    <property type="match status" value="1"/>
</dbReference>
<dbReference type="HAMAP" id="MF_00518">
    <property type="entry name" value="Deacylase_Dtd"/>
    <property type="match status" value="1"/>
</dbReference>
<dbReference type="InterPro" id="IPR003732">
    <property type="entry name" value="Daa-tRNA_deacyls_DTD"/>
</dbReference>
<dbReference type="InterPro" id="IPR023509">
    <property type="entry name" value="DTD-like_sf"/>
</dbReference>
<dbReference type="NCBIfam" id="TIGR00256">
    <property type="entry name" value="D-aminoacyl-tRNA deacylase"/>
    <property type="match status" value="1"/>
</dbReference>
<dbReference type="PANTHER" id="PTHR10472:SF5">
    <property type="entry name" value="D-AMINOACYL-TRNA DEACYLASE 1"/>
    <property type="match status" value="1"/>
</dbReference>
<dbReference type="PANTHER" id="PTHR10472">
    <property type="entry name" value="D-TYROSYL-TRNA TYR DEACYLASE"/>
    <property type="match status" value="1"/>
</dbReference>
<dbReference type="Pfam" id="PF02580">
    <property type="entry name" value="Tyr_Deacylase"/>
    <property type="match status" value="1"/>
</dbReference>
<dbReference type="SUPFAM" id="SSF69500">
    <property type="entry name" value="DTD-like"/>
    <property type="match status" value="1"/>
</dbReference>
<organism>
    <name type="scientific">Acinetobacter baylyi (strain ATCC 33305 / BD413 / ADP1)</name>
    <dbReference type="NCBI Taxonomy" id="62977"/>
    <lineage>
        <taxon>Bacteria</taxon>
        <taxon>Pseudomonadati</taxon>
        <taxon>Pseudomonadota</taxon>
        <taxon>Gammaproteobacteria</taxon>
        <taxon>Moraxellales</taxon>
        <taxon>Moraxellaceae</taxon>
        <taxon>Acinetobacter</taxon>
    </lineage>
</organism>
<keyword id="KW-0963">Cytoplasm</keyword>
<keyword id="KW-0378">Hydrolase</keyword>
<keyword id="KW-0694">RNA-binding</keyword>
<keyword id="KW-0820">tRNA-binding</keyword>
<protein>
    <recommendedName>
        <fullName evidence="1">D-aminoacyl-tRNA deacylase</fullName>
        <shortName evidence="1">DTD</shortName>
        <ecNumber evidence="1">3.1.1.96</ecNumber>
    </recommendedName>
    <alternativeName>
        <fullName evidence="1">Gly-tRNA(Ala) deacylase</fullName>
    </alternativeName>
</protein>
<name>DTD_ACIAD</name>
<accession>Q6F6W0</accession>